<dbReference type="EMBL" id="CP000446">
    <property type="protein sequence ID" value="ABI40522.1"/>
    <property type="molecule type" value="Genomic_DNA"/>
</dbReference>
<dbReference type="RefSeq" id="WP_011624187.1">
    <property type="nucleotide sequence ID" value="NC_008321.1"/>
</dbReference>
<dbReference type="SMR" id="Q0HEJ5"/>
<dbReference type="KEGG" id="she:Shewmr4_3456"/>
<dbReference type="HOGENOM" id="CLU_106757_2_0_6"/>
<dbReference type="GO" id="GO:0005829">
    <property type="term" value="C:cytosol"/>
    <property type="evidence" value="ECO:0007669"/>
    <property type="project" value="TreeGrafter"/>
</dbReference>
<dbReference type="GO" id="GO:0043022">
    <property type="term" value="F:ribosome binding"/>
    <property type="evidence" value="ECO:0007669"/>
    <property type="project" value="UniProtKB-UniRule"/>
</dbReference>
<dbReference type="GO" id="GO:0019843">
    <property type="term" value="F:rRNA binding"/>
    <property type="evidence" value="ECO:0007669"/>
    <property type="project" value="UniProtKB-UniRule"/>
</dbReference>
<dbReference type="GO" id="GO:1902626">
    <property type="term" value="P:assembly of large subunit precursor of preribosome"/>
    <property type="evidence" value="ECO:0007669"/>
    <property type="project" value="UniProtKB-UniRule"/>
</dbReference>
<dbReference type="CDD" id="cd16331">
    <property type="entry name" value="YjgA-like"/>
    <property type="match status" value="1"/>
</dbReference>
<dbReference type="Gene3D" id="1.10.60.30">
    <property type="entry name" value="PSPTO4464-like domains"/>
    <property type="match status" value="2"/>
</dbReference>
<dbReference type="HAMAP" id="MF_00765">
    <property type="entry name" value="DarP"/>
    <property type="match status" value="1"/>
</dbReference>
<dbReference type="InterPro" id="IPR006839">
    <property type="entry name" value="DarP"/>
</dbReference>
<dbReference type="InterPro" id="IPR023153">
    <property type="entry name" value="DarP_sf"/>
</dbReference>
<dbReference type="NCBIfam" id="NF003593">
    <property type="entry name" value="PRK05255.1-1"/>
    <property type="match status" value="1"/>
</dbReference>
<dbReference type="PANTHER" id="PTHR38101">
    <property type="entry name" value="UPF0307 PROTEIN YJGA"/>
    <property type="match status" value="1"/>
</dbReference>
<dbReference type="PANTHER" id="PTHR38101:SF1">
    <property type="entry name" value="UPF0307 PROTEIN YJGA"/>
    <property type="match status" value="1"/>
</dbReference>
<dbReference type="Pfam" id="PF04751">
    <property type="entry name" value="DarP"/>
    <property type="match status" value="1"/>
</dbReference>
<dbReference type="PIRSF" id="PIRSF016183">
    <property type="entry name" value="UCP016183"/>
    <property type="match status" value="1"/>
</dbReference>
<dbReference type="SUPFAM" id="SSF158710">
    <property type="entry name" value="PSPTO4464-like"/>
    <property type="match status" value="1"/>
</dbReference>
<evidence type="ECO:0000255" key="1">
    <source>
        <dbReference type="HAMAP-Rule" id="MF_00765"/>
    </source>
</evidence>
<evidence type="ECO:0000256" key="2">
    <source>
        <dbReference type="SAM" id="MobiDB-lite"/>
    </source>
</evidence>
<name>DARP_SHESM</name>
<comment type="function">
    <text evidence="1">Member of a network of 50S ribosomal subunit biogenesis factors which assembles along the 30S-50S interface, preventing incorrect 23S rRNA structures from forming. Promotes peptidyl transferase center (PTC) maturation.</text>
</comment>
<comment type="subcellular location">
    <subcellularLocation>
        <location evidence="1">Cytoplasm</location>
    </subcellularLocation>
    <text evidence="1">Associates with late stage pre-50S ribosomal subunits.</text>
</comment>
<comment type="similarity">
    <text evidence="1">Belongs to the DarP family.</text>
</comment>
<reference key="1">
    <citation type="submission" date="2006-08" db="EMBL/GenBank/DDBJ databases">
        <title>Complete sequence of Shewanella sp. MR-4.</title>
        <authorList>
            <consortium name="US DOE Joint Genome Institute"/>
            <person name="Copeland A."/>
            <person name="Lucas S."/>
            <person name="Lapidus A."/>
            <person name="Barry K."/>
            <person name="Detter J.C."/>
            <person name="Glavina del Rio T."/>
            <person name="Hammon N."/>
            <person name="Israni S."/>
            <person name="Dalin E."/>
            <person name="Tice H."/>
            <person name="Pitluck S."/>
            <person name="Kiss H."/>
            <person name="Brettin T."/>
            <person name="Bruce D."/>
            <person name="Han C."/>
            <person name="Tapia R."/>
            <person name="Gilna P."/>
            <person name="Schmutz J."/>
            <person name="Larimer F."/>
            <person name="Land M."/>
            <person name="Hauser L."/>
            <person name="Kyrpides N."/>
            <person name="Mikhailova N."/>
            <person name="Nealson K."/>
            <person name="Konstantinidis K."/>
            <person name="Klappenbach J."/>
            <person name="Tiedje J."/>
            <person name="Richardson P."/>
        </authorList>
    </citation>
    <scope>NUCLEOTIDE SEQUENCE [LARGE SCALE GENOMIC DNA]</scope>
    <source>
        <strain>MR-4</strain>
    </source>
</reference>
<keyword id="KW-0963">Cytoplasm</keyword>
<keyword id="KW-0690">Ribosome biogenesis</keyword>
<keyword id="KW-0694">RNA-binding</keyword>
<keyword id="KW-0699">rRNA-binding</keyword>
<feature type="chain" id="PRO_1000046804" description="Dual-action ribosomal maturation protein DarP">
    <location>
        <begin position="1"/>
        <end position="177"/>
    </location>
</feature>
<feature type="region of interest" description="Disordered" evidence="2">
    <location>
        <begin position="1"/>
        <end position="26"/>
    </location>
</feature>
<gene>
    <name evidence="1" type="primary">darP</name>
    <name type="ordered locus">Shewmr4_3456</name>
</gene>
<protein>
    <recommendedName>
        <fullName evidence="1">Dual-action ribosomal maturation protein DarP</fullName>
    </recommendedName>
    <alternativeName>
        <fullName evidence="1">Large ribosomal subunit assembly factor DarP</fullName>
    </alternativeName>
</protein>
<sequence length="177" mass="20648">MKIVGDSEHFKQPYDSDEEYVSKTEDKRDCEAAQKVGMELVSLSKTQLDKIELDEHLYDSIQQAHKIKPKTEAYRRHMQYIGKLMRHVDVEPIKAALAVVLNKNSNETAKLQIFEKMRERLLSQGDSEIQTLVEHYPQLDRQKLRTLVRQATKELAKGPESKSSKELFKYLRSEIQD</sequence>
<accession>Q0HEJ5</accession>
<organism>
    <name type="scientific">Shewanella sp. (strain MR-4)</name>
    <dbReference type="NCBI Taxonomy" id="60480"/>
    <lineage>
        <taxon>Bacteria</taxon>
        <taxon>Pseudomonadati</taxon>
        <taxon>Pseudomonadota</taxon>
        <taxon>Gammaproteobacteria</taxon>
        <taxon>Alteromonadales</taxon>
        <taxon>Shewanellaceae</taxon>
        <taxon>Shewanella</taxon>
    </lineage>
</organism>
<proteinExistence type="inferred from homology"/>